<feature type="chain" id="PRO_0000086385" description="Dual specificity mitogen-activated protein kinase kinase 5">
    <location>
        <begin position="1"/>
        <end position="448"/>
    </location>
</feature>
<feature type="domain" description="PB1" evidence="4">
    <location>
        <begin position="18"/>
        <end position="109"/>
    </location>
</feature>
<feature type="domain" description="Protein kinase" evidence="3">
    <location>
        <begin position="166"/>
        <end position="419"/>
    </location>
</feature>
<feature type="region of interest" description="Interaction with MAPK7" evidence="1">
    <location>
        <begin position="18"/>
        <end position="25"/>
    </location>
</feature>
<feature type="region of interest" description="Interaction with MAP3K2/MAP3K3" evidence="1">
    <location>
        <begin position="64"/>
        <end position="68"/>
    </location>
</feature>
<feature type="region of interest" description="Disordered" evidence="6">
    <location>
        <begin position="116"/>
        <end position="144"/>
    </location>
</feature>
<feature type="region of interest" description="Interaction with MAPK7" evidence="1">
    <location>
        <begin position="117"/>
        <end position="131"/>
    </location>
</feature>
<feature type="compositionally biased region" description="Polar residues" evidence="6">
    <location>
        <begin position="126"/>
        <end position="144"/>
    </location>
</feature>
<feature type="active site" description="Proton acceptor" evidence="3 5">
    <location>
        <position position="283"/>
    </location>
</feature>
<feature type="binding site" evidence="3">
    <location>
        <begin position="172"/>
        <end position="180"/>
    </location>
    <ligand>
        <name>ATP</name>
        <dbReference type="ChEBI" id="CHEBI:30616"/>
    </ligand>
</feature>
<feature type="binding site" evidence="3">
    <location>
        <position position="195"/>
    </location>
    <ligand>
        <name>ATP</name>
        <dbReference type="ChEBI" id="CHEBI:30616"/>
    </ligand>
</feature>
<feature type="modified residue" description="Phosphoserine" evidence="2">
    <location>
        <position position="311"/>
    </location>
</feature>
<feature type="modified residue" description="Phosphothreonine" evidence="2">
    <location>
        <position position="315"/>
    </location>
</feature>
<feature type="splice variant" id="VSP_004880" description="In isoform Beta." evidence="9">
    <location>
        <begin position="1"/>
        <end position="89"/>
    </location>
</feature>
<feature type="splice variant" id="VSP_004881" description="In isoform Alpha-2." evidence="9">
    <location>
        <begin position="349"/>
        <end position="358"/>
    </location>
</feature>
<feature type="mutagenesis site" description="No change in activity." evidence="8">
    <original>S</original>
    <variation>D</variation>
    <location>
        <position position="311"/>
    </location>
</feature>
<feature type="mutagenesis site" description="No change in activity." evidence="8">
    <original>T</original>
    <variation>D</variation>
    <location>
        <position position="315"/>
    </location>
</feature>
<accession>Q62862</accession>
<accession>Q62863</accession>
<accession>Q62864</accession>
<reference key="1">
    <citation type="journal article" date="1995" name="J. Biol. Chem.">
        <title>Isolation of MEK5 and differential expression of alternatively spliced forms.</title>
        <authorList>
            <person name="English J.M."/>
            <person name="Vanderbilt C.A."/>
            <person name="Xu S."/>
            <person name="Marcus S."/>
            <person name="Cobb M.H."/>
        </authorList>
    </citation>
    <scope>NUCLEOTIDE SEQUENCE [MRNA] (ISOFORMS ALPHA-1; ALPHA-2 AND BETA)</scope>
    <scope>FUNCTION</scope>
    <scope>TISSUE SPECIFICITY (ISOFORMS ALPHA-1: ALPHA-2 AND BETA)</scope>
    <scope>MUTAGENESIS OF SER-311 AND THR-315</scope>
    <source>
        <strain>Sprague-Dawley</strain>
        <tissue>Brain</tissue>
    </source>
</reference>
<reference key="2">
    <citation type="journal article" date="2004" name="Genome Res.">
        <title>The status, quality, and expansion of the NIH full-length cDNA project: the Mammalian Gene Collection (MGC).</title>
        <authorList>
            <consortium name="The MGC Project Team"/>
        </authorList>
    </citation>
    <scope>NUCLEOTIDE SEQUENCE [LARGE SCALE MRNA] (ISOFORM ALPHA-1)</scope>
    <source>
        <tissue>Lung</tissue>
    </source>
</reference>
<reference key="3">
    <citation type="journal article" date="2010" name="FASEB J.">
        <title>Novel role of C terminus of Hsc70-interacting protein (CHIP) ubiquitin ligase on inhibiting cardiac apoptosis and dysfunction via regulating ERK5-mediated degradation of inducible cAMP early repressor.</title>
        <authorList>
            <person name="Woo C.H."/>
            <person name="Le N.T."/>
            <person name="Shishido T."/>
            <person name="Chang E."/>
            <person name="Lee H."/>
            <person name="Heo K.S."/>
            <person name="Mickelsen D.M."/>
            <person name="Lu Y."/>
            <person name="McClain C."/>
            <person name="Spangenberg T."/>
            <person name="Yan C."/>
            <person name="Molina C.A."/>
            <person name="Yang J."/>
            <person name="Patterson C."/>
            <person name="Abe J."/>
        </authorList>
    </citation>
    <scope>FUNCTION</scope>
</reference>
<protein>
    <recommendedName>
        <fullName>Dual specificity mitogen-activated protein kinase kinase 5</fullName>
        <shortName>MAP kinase kinase 5</shortName>
        <shortName>MAPKK 5</shortName>
        <ecNumber>2.7.12.2</ecNumber>
    </recommendedName>
    <alternativeName>
        <fullName>MAPK/ERK kinase 5</fullName>
        <shortName>MEK 5</shortName>
    </alternativeName>
</protein>
<comment type="function">
    <text evidence="1 7 8">Acts as a scaffold for the formation of a ternary MAP3K2/MAP3K3-MAP3K5-MAPK7 signaling complex. Activation of this pathway appears to play a critical role in protecting cells from stress-induced apoptosis, neuronal survival and cardiac development and angiogenesis (By similarity). As part of the MAPK/ERK signaling pathway, acts as a negative regulator of apoptosis in cardiomyocytes via promotion of STUB1/CHIP-mediated ubiquitination and degradation of ICER-type isoforms of CREM (PubMed:20724525).</text>
</comment>
<comment type="catalytic activity">
    <reaction>
        <text>L-seryl-[protein] + ATP = O-phospho-L-seryl-[protein] + ADP + H(+)</text>
        <dbReference type="Rhea" id="RHEA:17989"/>
        <dbReference type="Rhea" id="RHEA-COMP:9863"/>
        <dbReference type="Rhea" id="RHEA-COMP:11604"/>
        <dbReference type="ChEBI" id="CHEBI:15378"/>
        <dbReference type="ChEBI" id="CHEBI:29999"/>
        <dbReference type="ChEBI" id="CHEBI:30616"/>
        <dbReference type="ChEBI" id="CHEBI:83421"/>
        <dbReference type="ChEBI" id="CHEBI:456216"/>
        <dbReference type="EC" id="2.7.12.2"/>
    </reaction>
</comment>
<comment type="catalytic activity">
    <reaction>
        <text>L-threonyl-[protein] + ATP = O-phospho-L-threonyl-[protein] + ADP + H(+)</text>
        <dbReference type="Rhea" id="RHEA:46608"/>
        <dbReference type="Rhea" id="RHEA-COMP:11060"/>
        <dbReference type="Rhea" id="RHEA-COMP:11605"/>
        <dbReference type="ChEBI" id="CHEBI:15378"/>
        <dbReference type="ChEBI" id="CHEBI:30013"/>
        <dbReference type="ChEBI" id="CHEBI:30616"/>
        <dbReference type="ChEBI" id="CHEBI:61977"/>
        <dbReference type="ChEBI" id="CHEBI:456216"/>
        <dbReference type="EC" id="2.7.12.2"/>
    </reaction>
</comment>
<comment type="catalytic activity">
    <reaction>
        <text>L-tyrosyl-[protein] + ATP = O-phospho-L-tyrosyl-[protein] + ADP + H(+)</text>
        <dbReference type="Rhea" id="RHEA:10596"/>
        <dbReference type="Rhea" id="RHEA-COMP:10136"/>
        <dbReference type="Rhea" id="RHEA-COMP:20101"/>
        <dbReference type="ChEBI" id="CHEBI:15378"/>
        <dbReference type="ChEBI" id="CHEBI:30616"/>
        <dbReference type="ChEBI" id="CHEBI:46858"/>
        <dbReference type="ChEBI" id="CHEBI:61978"/>
        <dbReference type="ChEBI" id="CHEBI:456216"/>
        <dbReference type="EC" id="2.7.12.2"/>
    </reaction>
</comment>
<comment type="cofactor">
    <cofactor>
        <name>Mg(2+)</name>
        <dbReference type="ChEBI" id="CHEBI:18420"/>
    </cofactor>
</comment>
<comment type="subunit">
    <text evidence="1">Interacts with PARD6A, MAP3K3 and MAPK7. Forms a complex with SQSTM1 and PRKCZ or PRKCI (By similarity).</text>
</comment>
<comment type="subcellular location">
    <molecule>Isoform Beta</molecule>
    <subcellularLocation>
        <location>Cytoplasm</location>
        <location>Cytosol</location>
    </subcellularLocation>
</comment>
<comment type="subcellular location">
    <molecule>Isoform Alpha-1</molecule>
    <subcellularLocation>
        <location>Membrane</location>
    </subcellularLocation>
    <text>The alternatively spliced exon in alpha isoform resemble conserved sequences that mediate interactions with the cytoskeleton, thereby explaining the differential localization.</text>
</comment>
<comment type="subcellular location">
    <molecule>Isoform Alpha-2</molecule>
    <subcellularLocation>
        <location>Membrane</location>
    </subcellularLocation>
    <text>The alternatively spliced exon in alpha isoform resemble conserved sequences that mediate interactions with the cytoskeleton, thereby explaining the differential localization.</text>
</comment>
<comment type="alternative products">
    <event type="alternative splicing"/>
    <isoform>
        <id>Q62862-1</id>
        <name>Alpha-1</name>
        <sequence type="displayed"/>
    </isoform>
    <isoform>
        <id>Q62862-2</id>
        <name>Alpha-2</name>
        <sequence type="described" ref="VSP_004881"/>
    </isoform>
    <isoform>
        <id>Q62862-3</id>
        <name>Beta</name>
        <sequence type="described" ref="VSP_004880"/>
    </isoform>
</comment>
<comment type="tissue specificity">
    <molecule>Isoform Alpha-1</molecule>
    <text evidence="8">Expressed in the liver and brain (at protein level).</text>
</comment>
<comment type="tissue specificity">
    <molecule>Isoform Alpha-2</molecule>
    <text evidence="8">Expressed in the liver and brain (at protein level).</text>
</comment>
<comment type="tissue specificity">
    <molecule>Isoform Beta</molecule>
    <text evidence="8">Expressed in the liver, muscle, testes, lung, kidney, spleen, heart and brain (at protein level).</text>
</comment>
<comment type="domain">
    <text evidence="1">Binds MAP3K2/MAP3K3 and MAPK7 via non-overlapping residues of the PB1 domain. This domain also mediates interactions with SQSTM1 and PARD6A (By similarity).</text>
</comment>
<comment type="PTM">
    <text evidence="1">Activated by phosphorylation on Ser/Thr by MAP kinase kinase kinases.</text>
</comment>
<comment type="similarity">
    <text evidence="10">Belongs to the protein kinase superfamily. STE Ser/Thr protein kinase family. MAP kinase kinase subfamily.</text>
</comment>
<gene>
    <name type="primary">Map2k5</name>
    <name type="synonym">Mek5</name>
    <name type="synonym">Mkk5</name>
    <name type="synonym">Prkmk5</name>
</gene>
<evidence type="ECO:0000250" key="1"/>
<evidence type="ECO:0000250" key="2">
    <source>
        <dbReference type="UniProtKB" id="Q13163"/>
    </source>
</evidence>
<evidence type="ECO:0000255" key="3">
    <source>
        <dbReference type="PROSITE-ProRule" id="PRU00159"/>
    </source>
</evidence>
<evidence type="ECO:0000255" key="4">
    <source>
        <dbReference type="PROSITE-ProRule" id="PRU01081"/>
    </source>
</evidence>
<evidence type="ECO:0000255" key="5">
    <source>
        <dbReference type="PROSITE-ProRule" id="PRU10027"/>
    </source>
</evidence>
<evidence type="ECO:0000256" key="6">
    <source>
        <dbReference type="SAM" id="MobiDB-lite"/>
    </source>
</evidence>
<evidence type="ECO:0000269" key="7">
    <source>
    </source>
</evidence>
<evidence type="ECO:0000269" key="8">
    <source>
    </source>
</evidence>
<evidence type="ECO:0000303" key="9">
    <source>
    </source>
</evidence>
<evidence type="ECO:0000305" key="10"/>
<keyword id="KW-0025">Alternative splicing</keyword>
<keyword id="KW-0067">ATP-binding</keyword>
<keyword id="KW-0963">Cytoplasm</keyword>
<keyword id="KW-0418">Kinase</keyword>
<keyword id="KW-0460">Magnesium</keyword>
<keyword id="KW-0472">Membrane</keyword>
<keyword id="KW-0479">Metal-binding</keyword>
<keyword id="KW-0547">Nucleotide-binding</keyword>
<keyword id="KW-0597">Phosphoprotein</keyword>
<keyword id="KW-1185">Reference proteome</keyword>
<keyword id="KW-0723">Serine/threonine-protein kinase</keyword>
<keyword id="KW-0808">Transferase</keyword>
<keyword id="KW-0829">Tyrosine-protein kinase</keyword>
<name>MP2K5_RAT</name>
<organism>
    <name type="scientific">Rattus norvegicus</name>
    <name type="common">Rat</name>
    <dbReference type="NCBI Taxonomy" id="10116"/>
    <lineage>
        <taxon>Eukaryota</taxon>
        <taxon>Metazoa</taxon>
        <taxon>Chordata</taxon>
        <taxon>Craniata</taxon>
        <taxon>Vertebrata</taxon>
        <taxon>Euteleostomi</taxon>
        <taxon>Mammalia</taxon>
        <taxon>Eutheria</taxon>
        <taxon>Euarchontoglires</taxon>
        <taxon>Glires</taxon>
        <taxon>Rodentia</taxon>
        <taxon>Myomorpha</taxon>
        <taxon>Muroidea</taxon>
        <taxon>Muridae</taxon>
        <taxon>Murinae</taxon>
        <taxon>Rattus</taxon>
    </lineage>
</organism>
<proteinExistence type="evidence at protein level"/>
<sequence>MLWLALGPFRAMENQVLVIRIKIPNSGAVDWTVHSGPQLLFRDVLDVIGQVLPEATTTAFEYEDEDGDRITVRSDEEMKAMLSYYYSTVMEQQVNGQLIEPLQIFPRACKPPGERNIHGLKVNTRAGPSQHTSPVVSDSLPSNSLKKSSAELRKILANGQMNEQDIRYRDTLGHGNGGTVYKAYHVPSGKILAVKVILLDITLELQKQIMSELEILYKCDSSYIIGFYGAFFVENRISICTEFMDGGSLDVYRKIPEHVLGRIAVAVVKGLTYLWSLKILHRDVKPSNMLVNTSGQVKLCDFGVSTQLVNSIAKTYVGTNAYMAPERISGEQYGIHSDVWSLGISFMELALGRFPYPQIQKNQGSLMPLQLLQCIVDEDSPVLPLGEFSEPFVHFITQCMRKQPKERPAPEELMGHPFIVQFNDGNATVVSMWVCRALEERRSQQGPP</sequence>
<dbReference type="EC" id="2.7.12.2"/>
<dbReference type="EMBL" id="U37462">
    <property type="protein sequence ID" value="AAC52320.1"/>
    <property type="molecule type" value="mRNA"/>
</dbReference>
<dbReference type="EMBL" id="U37463">
    <property type="protein sequence ID" value="AAC52321.1"/>
    <property type="molecule type" value="mRNA"/>
</dbReference>
<dbReference type="EMBL" id="U37464">
    <property type="protein sequence ID" value="AAC52322.1"/>
    <property type="molecule type" value="mRNA"/>
</dbReference>
<dbReference type="EMBL" id="BC078860">
    <property type="protein sequence ID" value="AAH78860.1"/>
    <property type="molecule type" value="mRNA"/>
</dbReference>
<dbReference type="RefSeq" id="NP_001029159.1">
    <molecule id="Q62862-1"/>
    <property type="nucleotide sequence ID" value="NM_001033987.1"/>
</dbReference>
<dbReference type="RefSeq" id="NP_058942.1">
    <molecule id="Q62862-2"/>
    <property type="nucleotide sequence ID" value="NM_017246.2"/>
</dbReference>
<dbReference type="RefSeq" id="XP_017450991.1">
    <property type="nucleotide sequence ID" value="XM_017595502.1"/>
</dbReference>
<dbReference type="SMR" id="Q62862"/>
<dbReference type="FunCoup" id="Q62862">
    <property type="interactions" value="2895"/>
</dbReference>
<dbReference type="IntAct" id="Q62862">
    <property type="interactions" value="1"/>
</dbReference>
<dbReference type="STRING" id="10116.ENSRNOP00000050528"/>
<dbReference type="iPTMnet" id="Q62862"/>
<dbReference type="PhosphoSitePlus" id="Q62862"/>
<dbReference type="PaxDb" id="10116-ENSRNOP00000050528"/>
<dbReference type="Ensembl" id="ENSRNOT00000010991.7">
    <molecule id="Q62862-2"/>
    <property type="protein sequence ID" value="ENSRNOP00000010991.6"/>
    <property type="gene ID" value="ENSRNOG00000007926.9"/>
</dbReference>
<dbReference type="Ensembl" id="ENSRNOT00000051558.5">
    <molecule id="Q62862-1"/>
    <property type="protein sequence ID" value="ENSRNOP00000050528.2"/>
    <property type="gene ID" value="ENSRNOG00000007926.9"/>
</dbReference>
<dbReference type="GeneID" id="29568"/>
<dbReference type="KEGG" id="rno:29568"/>
<dbReference type="UCSC" id="RGD:61890">
    <molecule id="Q62862-1"/>
    <property type="organism name" value="rat"/>
</dbReference>
<dbReference type="AGR" id="RGD:61890"/>
<dbReference type="CTD" id="5607"/>
<dbReference type="RGD" id="61890">
    <property type="gene designation" value="Map2k5"/>
</dbReference>
<dbReference type="eggNOG" id="KOG0581">
    <property type="taxonomic scope" value="Eukaryota"/>
</dbReference>
<dbReference type="GeneTree" id="ENSGT00940000157505"/>
<dbReference type="InParanoid" id="Q62862"/>
<dbReference type="OMA" id="ANDCTQV"/>
<dbReference type="OrthoDB" id="10252354at2759"/>
<dbReference type="PhylomeDB" id="Q62862"/>
<dbReference type="BRENDA" id="2.7.12.2">
    <property type="organism ID" value="5301"/>
</dbReference>
<dbReference type="PRO" id="PR:Q62862"/>
<dbReference type="Proteomes" id="UP000002494">
    <property type="component" value="Chromosome 8"/>
</dbReference>
<dbReference type="Bgee" id="ENSRNOG00000007926">
    <property type="expression patterns" value="Expressed in skeletal muscle tissue and 20 other cell types or tissues"/>
</dbReference>
<dbReference type="GO" id="GO:0005829">
    <property type="term" value="C:cytosol"/>
    <property type="evidence" value="ECO:0000304"/>
    <property type="project" value="Reactome"/>
</dbReference>
<dbReference type="GO" id="GO:0016020">
    <property type="term" value="C:membrane"/>
    <property type="evidence" value="ECO:0007669"/>
    <property type="project" value="UniProtKB-SubCell"/>
</dbReference>
<dbReference type="GO" id="GO:0005819">
    <property type="term" value="C:spindle"/>
    <property type="evidence" value="ECO:0000266"/>
    <property type="project" value="RGD"/>
</dbReference>
<dbReference type="GO" id="GO:0005524">
    <property type="term" value="F:ATP binding"/>
    <property type="evidence" value="ECO:0000314"/>
    <property type="project" value="RGD"/>
</dbReference>
<dbReference type="GO" id="GO:0004707">
    <property type="term" value="F:MAP kinase activity"/>
    <property type="evidence" value="ECO:0000304"/>
    <property type="project" value="Reactome"/>
</dbReference>
<dbReference type="GO" id="GO:0004708">
    <property type="term" value="F:MAP kinase kinase activity"/>
    <property type="evidence" value="ECO:0000266"/>
    <property type="project" value="RGD"/>
</dbReference>
<dbReference type="GO" id="GO:0046872">
    <property type="term" value="F:metal ion binding"/>
    <property type="evidence" value="ECO:0007669"/>
    <property type="project" value="UniProtKB-KW"/>
</dbReference>
<dbReference type="GO" id="GO:0004672">
    <property type="term" value="F:protein kinase activity"/>
    <property type="evidence" value="ECO:0000314"/>
    <property type="project" value="RGD"/>
</dbReference>
<dbReference type="GO" id="GO:0106310">
    <property type="term" value="F:protein serine kinase activity"/>
    <property type="evidence" value="ECO:0007669"/>
    <property type="project" value="RHEA"/>
</dbReference>
<dbReference type="GO" id="GO:0004713">
    <property type="term" value="F:protein tyrosine kinase activity"/>
    <property type="evidence" value="ECO:0007669"/>
    <property type="project" value="UniProtKB-KW"/>
</dbReference>
<dbReference type="GO" id="GO:0071363">
    <property type="term" value="P:cellular response to growth factor stimulus"/>
    <property type="evidence" value="ECO:0000315"/>
    <property type="project" value="BHF-UCL"/>
</dbReference>
<dbReference type="GO" id="GO:0070375">
    <property type="term" value="P:ERK5 cascade"/>
    <property type="evidence" value="ECO:0000315"/>
    <property type="project" value="RGD"/>
</dbReference>
<dbReference type="GO" id="GO:0007507">
    <property type="term" value="P:heart development"/>
    <property type="evidence" value="ECO:0000266"/>
    <property type="project" value="RGD"/>
</dbReference>
<dbReference type="GO" id="GO:0048009">
    <property type="term" value="P:insulin-like growth factor receptor signaling pathway"/>
    <property type="evidence" value="ECO:0000266"/>
    <property type="project" value="RGD"/>
</dbReference>
<dbReference type="GO" id="GO:0000165">
    <property type="term" value="P:MAPK cascade"/>
    <property type="evidence" value="ECO:0000315"/>
    <property type="project" value="UniProtKB"/>
</dbReference>
<dbReference type="GO" id="GO:0043124">
    <property type="term" value="P:negative regulation of canonical NF-kappaB signal transduction"/>
    <property type="evidence" value="ECO:0000315"/>
    <property type="project" value="BHF-UCL"/>
</dbReference>
<dbReference type="GO" id="GO:0090051">
    <property type="term" value="P:negative regulation of cell migration involved in sprouting angiogenesis"/>
    <property type="evidence" value="ECO:0000315"/>
    <property type="project" value="BHF-UCL"/>
</dbReference>
<dbReference type="GO" id="GO:2000342">
    <property type="term" value="P:negative regulation of chemokine (C-X-C motif) ligand 2 production"/>
    <property type="evidence" value="ECO:0000315"/>
    <property type="project" value="BHF-UCL"/>
</dbReference>
<dbReference type="GO" id="GO:2001240">
    <property type="term" value="P:negative regulation of extrinsic apoptotic signaling pathway in absence of ligand"/>
    <property type="evidence" value="ECO:0000315"/>
    <property type="project" value="BHF-UCL"/>
</dbReference>
<dbReference type="GO" id="GO:0034115">
    <property type="term" value="P:negative regulation of heterotypic cell-cell adhesion"/>
    <property type="evidence" value="ECO:0000315"/>
    <property type="project" value="BHF-UCL"/>
</dbReference>
<dbReference type="GO" id="GO:0032717">
    <property type="term" value="P:negative regulation of interleukin-8 production"/>
    <property type="evidence" value="ECO:0000315"/>
    <property type="project" value="BHF-UCL"/>
</dbReference>
<dbReference type="GO" id="GO:0060761">
    <property type="term" value="P:negative regulation of response to cytokine stimulus"/>
    <property type="evidence" value="ECO:0000315"/>
    <property type="project" value="BHF-UCL"/>
</dbReference>
<dbReference type="GO" id="GO:0034392">
    <property type="term" value="P:negative regulation of smooth muscle cell apoptotic process"/>
    <property type="evidence" value="ECO:0000315"/>
    <property type="project" value="UniProtKB"/>
</dbReference>
<dbReference type="GO" id="GO:0000122">
    <property type="term" value="P:negative regulation of transcription by RNA polymerase II"/>
    <property type="evidence" value="ECO:0000315"/>
    <property type="project" value="BHF-UCL"/>
</dbReference>
<dbReference type="GO" id="GO:0030307">
    <property type="term" value="P:positive regulation of cell growth"/>
    <property type="evidence" value="ECO:0000315"/>
    <property type="project" value="RGD"/>
</dbReference>
<dbReference type="GO" id="GO:0050679">
    <property type="term" value="P:positive regulation of epithelial cell proliferation"/>
    <property type="evidence" value="ECO:0000314"/>
    <property type="project" value="RGD"/>
</dbReference>
<dbReference type="GO" id="GO:0051247">
    <property type="term" value="P:positive regulation of protein metabolic process"/>
    <property type="evidence" value="ECO:0000315"/>
    <property type="project" value="BHF-UCL"/>
</dbReference>
<dbReference type="GO" id="GO:0045944">
    <property type="term" value="P:positive regulation of transcription by RNA polymerase II"/>
    <property type="evidence" value="ECO:0000315"/>
    <property type="project" value="BHF-UCL"/>
</dbReference>
<dbReference type="CDD" id="cd06395">
    <property type="entry name" value="PB1_Map2k5"/>
    <property type="match status" value="1"/>
</dbReference>
<dbReference type="CDD" id="cd06619">
    <property type="entry name" value="PKc_MKK5"/>
    <property type="match status" value="1"/>
</dbReference>
<dbReference type="FunFam" id="1.10.510.10:FF:000296">
    <property type="entry name" value="Dual specificity mitogen-activated protein kinase kinase 5"/>
    <property type="match status" value="1"/>
</dbReference>
<dbReference type="FunFam" id="3.10.20.90:FF:000085">
    <property type="entry name" value="Dual specificity mitogen-activated protein kinase kinase 5"/>
    <property type="match status" value="1"/>
</dbReference>
<dbReference type="FunFam" id="3.30.200.20:FF:000197">
    <property type="entry name" value="dual specificity mitogen-activated protein kinase kinase 5"/>
    <property type="match status" value="1"/>
</dbReference>
<dbReference type="Gene3D" id="3.10.20.90">
    <property type="entry name" value="Phosphatidylinositol 3-kinase Catalytic Subunit, Chain A, domain 1"/>
    <property type="match status" value="1"/>
</dbReference>
<dbReference type="Gene3D" id="3.30.200.20">
    <property type="entry name" value="Phosphorylase Kinase, domain 1"/>
    <property type="match status" value="1"/>
</dbReference>
<dbReference type="Gene3D" id="1.10.510.10">
    <property type="entry name" value="Transferase(Phosphotransferase) domain 1"/>
    <property type="match status" value="1"/>
</dbReference>
<dbReference type="InterPro" id="IPR052468">
    <property type="entry name" value="Dual_spec_MAPK_kinase"/>
</dbReference>
<dbReference type="InterPro" id="IPR011009">
    <property type="entry name" value="Kinase-like_dom_sf"/>
</dbReference>
<dbReference type="InterPro" id="IPR053793">
    <property type="entry name" value="PB1-like"/>
</dbReference>
<dbReference type="InterPro" id="IPR000270">
    <property type="entry name" value="PB1_dom"/>
</dbReference>
<dbReference type="InterPro" id="IPR034851">
    <property type="entry name" value="PB1_MAP2K5"/>
</dbReference>
<dbReference type="InterPro" id="IPR000719">
    <property type="entry name" value="Prot_kinase_dom"/>
</dbReference>
<dbReference type="InterPro" id="IPR017441">
    <property type="entry name" value="Protein_kinase_ATP_BS"/>
</dbReference>
<dbReference type="InterPro" id="IPR008271">
    <property type="entry name" value="Ser/Thr_kinase_AS"/>
</dbReference>
<dbReference type="PANTHER" id="PTHR47238">
    <property type="entry name" value="MITOGEN-ACTIVATED PROTEIN KINASE KINASE 5"/>
    <property type="match status" value="1"/>
</dbReference>
<dbReference type="PANTHER" id="PTHR47238:SF4">
    <property type="entry name" value="MITOGEN-ACTIVATED PROTEIN KINASE KINASE 5"/>
    <property type="match status" value="1"/>
</dbReference>
<dbReference type="Pfam" id="PF00564">
    <property type="entry name" value="PB1"/>
    <property type="match status" value="1"/>
</dbReference>
<dbReference type="Pfam" id="PF00069">
    <property type="entry name" value="Pkinase"/>
    <property type="match status" value="1"/>
</dbReference>
<dbReference type="SMART" id="SM00666">
    <property type="entry name" value="PB1"/>
    <property type="match status" value="1"/>
</dbReference>
<dbReference type="SMART" id="SM00220">
    <property type="entry name" value="S_TKc"/>
    <property type="match status" value="1"/>
</dbReference>
<dbReference type="SUPFAM" id="SSF54277">
    <property type="entry name" value="CAD &amp; PB1 domains"/>
    <property type="match status" value="1"/>
</dbReference>
<dbReference type="SUPFAM" id="SSF56112">
    <property type="entry name" value="Protein kinase-like (PK-like)"/>
    <property type="match status" value="1"/>
</dbReference>
<dbReference type="PROSITE" id="PS51745">
    <property type="entry name" value="PB1"/>
    <property type="match status" value="1"/>
</dbReference>
<dbReference type="PROSITE" id="PS00107">
    <property type="entry name" value="PROTEIN_KINASE_ATP"/>
    <property type="match status" value="1"/>
</dbReference>
<dbReference type="PROSITE" id="PS50011">
    <property type="entry name" value="PROTEIN_KINASE_DOM"/>
    <property type="match status" value="1"/>
</dbReference>
<dbReference type="PROSITE" id="PS00108">
    <property type="entry name" value="PROTEIN_KINASE_ST"/>
    <property type="match status" value="1"/>
</dbReference>